<sequence length="160" mass="17963">MSKSGNKNQNCPKCNNSPWIQRANNFIAQNQNVQTGTKEYYQVEAVKYLLNNGHCGIDCRAKISDIIKGINYPKNREAFQHEVLIPLKQYGIIATLVYPGRKGGVFIPCNNDEIKKVAKQVFKRIESELENLEGSATGVQNIKNLANSLKTTVHNLKNTI</sequence>
<evidence type="ECO:0000303" key="1">
    <source>
    </source>
</evidence>
<protein>
    <recommendedName>
        <fullName evidence="1">Putative control protein C.MjaVP</fullName>
        <shortName evidence="1">C.MjaVP</shortName>
    </recommendedName>
</protein>
<gene>
    <name type="ordered locus">MJ1499</name>
</gene>
<proteinExistence type="predicted"/>
<feature type="chain" id="PRO_0000107379" description="Putative control protein C.MjaVP">
    <location>
        <begin position="1"/>
        <end position="160"/>
    </location>
</feature>
<reference key="1">
    <citation type="journal article" date="1996" name="Science">
        <title>Complete genome sequence of the methanogenic archaeon, Methanococcus jannaschii.</title>
        <authorList>
            <person name="Bult C.J."/>
            <person name="White O."/>
            <person name="Olsen G.J."/>
            <person name="Zhou L."/>
            <person name="Fleischmann R.D."/>
            <person name="Sutton G.G."/>
            <person name="Blake J.A."/>
            <person name="FitzGerald L.M."/>
            <person name="Clayton R.A."/>
            <person name="Gocayne J.D."/>
            <person name="Kerlavage A.R."/>
            <person name="Dougherty B.A."/>
            <person name="Tomb J.-F."/>
            <person name="Adams M.D."/>
            <person name="Reich C.I."/>
            <person name="Overbeek R."/>
            <person name="Kirkness E.F."/>
            <person name="Weinstock K.G."/>
            <person name="Merrick J.M."/>
            <person name="Glodek A."/>
            <person name="Scott J.L."/>
            <person name="Geoghagen N.S.M."/>
            <person name="Weidman J.F."/>
            <person name="Fuhrmann J.L."/>
            <person name="Nguyen D."/>
            <person name="Utterback T.R."/>
            <person name="Kelley J.M."/>
            <person name="Peterson J.D."/>
            <person name="Sadow P.W."/>
            <person name="Hanna M.C."/>
            <person name="Cotton M.D."/>
            <person name="Roberts K.M."/>
            <person name="Hurst M.A."/>
            <person name="Kaine B.P."/>
            <person name="Borodovsky M."/>
            <person name="Klenk H.-P."/>
            <person name="Fraser C.M."/>
            <person name="Smith H.O."/>
            <person name="Woese C.R."/>
            <person name="Venter J.C."/>
        </authorList>
    </citation>
    <scope>NUCLEOTIDE SEQUENCE [LARGE SCALE GENOMIC DNA]</scope>
    <source>
        <strain>ATCC 43067 / DSM 2661 / JAL-1 / JCM 10045 / NBRC 100440</strain>
    </source>
</reference>
<reference key="2">
    <citation type="journal article" date="2003" name="Nucleic Acids Res.">
        <title>A nomenclature for restriction enzymes, DNA methyltransferases, homing endonucleases and their genes.</title>
        <authorList>
            <person name="Roberts R.J."/>
            <person name="Belfort M."/>
            <person name="Bestor T."/>
            <person name="Bhagwat A.S."/>
            <person name="Bickle T.A."/>
            <person name="Bitinaite J."/>
            <person name="Blumenthal R.M."/>
            <person name="Degtyarev S.K."/>
            <person name="Dryden D.T."/>
            <person name="Dybvig K."/>
            <person name="Firman K."/>
            <person name="Gromova E.S."/>
            <person name="Gumport R.I."/>
            <person name="Halford S.E."/>
            <person name="Hattman S."/>
            <person name="Heitman J."/>
            <person name="Hornby D.P."/>
            <person name="Janulaitis A."/>
            <person name="Jeltsch A."/>
            <person name="Josephsen J."/>
            <person name="Kiss A."/>
            <person name="Klaenhammer T.R."/>
            <person name="Kobayashi I."/>
            <person name="Kong H."/>
            <person name="Krueger D.H."/>
            <person name="Lacks S."/>
            <person name="Marinus M.G."/>
            <person name="Miyahara M."/>
            <person name="Morgan R.D."/>
            <person name="Murray N.E."/>
            <person name="Nagaraja V."/>
            <person name="Piekarowicz A."/>
            <person name="Pingoud A."/>
            <person name="Raleigh E."/>
            <person name="Rao D.N."/>
            <person name="Reich N."/>
            <person name="Repin V.E."/>
            <person name="Selker E.U."/>
            <person name="Shaw P.C."/>
            <person name="Stein D.C."/>
            <person name="Stoddard B.L."/>
            <person name="Szybalski W."/>
            <person name="Trautner T.A."/>
            <person name="Van Etten J.L."/>
            <person name="Vitor J.M."/>
            <person name="Wilson G.G."/>
            <person name="Xu S.Y."/>
        </authorList>
    </citation>
    <scope>NOMENCLATURE</scope>
</reference>
<accession>Q58894</accession>
<keyword id="KW-1185">Reference proteome</keyword>
<comment type="function">
    <text evidence="1">May be involved in control of expression of the type II restriction enzyme MjaV and/or its methyltransferase M.MjaV.</text>
</comment>
<name>C2M5_METJA</name>
<dbReference type="EMBL" id="L77117">
    <property type="protein sequence ID" value="AAB99512.1"/>
    <property type="molecule type" value="Genomic_DNA"/>
</dbReference>
<dbReference type="PIR" id="B64487">
    <property type="entry name" value="B64487"/>
</dbReference>
<dbReference type="RefSeq" id="WP_010871022.1">
    <property type="nucleotide sequence ID" value="NC_000909.1"/>
</dbReference>
<dbReference type="SMR" id="Q58894"/>
<dbReference type="STRING" id="243232.MJ_1499"/>
<dbReference type="REBASE" id="3907">
    <property type="entry name" value="C.MjaVP"/>
</dbReference>
<dbReference type="PaxDb" id="243232-MJ_1499"/>
<dbReference type="EnsemblBacteria" id="AAB99512">
    <property type="protein sequence ID" value="AAB99512"/>
    <property type="gene ID" value="MJ_1499"/>
</dbReference>
<dbReference type="GeneID" id="1452406"/>
<dbReference type="KEGG" id="mja:MJ_1499"/>
<dbReference type="eggNOG" id="arCOG09627">
    <property type="taxonomic scope" value="Archaea"/>
</dbReference>
<dbReference type="HOGENOM" id="CLU_1648316_0_0_2"/>
<dbReference type="InParanoid" id="Q58894"/>
<dbReference type="OrthoDB" id="379735at2157"/>
<dbReference type="Proteomes" id="UP000000805">
    <property type="component" value="Chromosome"/>
</dbReference>
<organism>
    <name type="scientific">Methanocaldococcus jannaschii (strain ATCC 43067 / DSM 2661 / JAL-1 / JCM 10045 / NBRC 100440)</name>
    <name type="common">Methanococcus jannaschii</name>
    <dbReference type="NCBI Taxonomy" id="243232"/>
    <lineage>
        <taxon>Archaea</taxon>
        <taxon>Methanobacteriati</taxon>
        <taxon>Methanobacteriota</taxon>
        <taxon>Methanomada group</taxon>
        <taxon>Methanococci</taxon>
        <taxon>Methanococcales</taxon>
        <taxon>Methanocaldococcaceae</taxon>
        <taxon>Methanocaldococcus</taxon>
    </lineage>
</organism>